<comment type="function">
    <text evidence="1">Necessary for efficient adipogenesis. Does not show ion channel activity.</text>
</comment>
<comment type="subcellular location">
    <subcellularLocation>
        <location evidence="1">Nucleus inner membrane</location>
        <topology evidence="2">Multi-pass membrane protein</topology>
    </subcellularLocation>
</comment>
<comment type="similarity">
    <text evidence="3">Belongs to the TMEM120 family.</text>
</comment>
<comment type="sequence caution" evidence="3">
    <conflict type="erroneous termination">
        <sequence resource="EMBL-CDS" id="AAH95336"/>
    </conflict>
    <text>Truncated C-terminus.</text>
</comment>
<accession>Q1LY80</accession>
<accession>Q503G6</accession>
<keyword id="KW-0175">Coiled coil</keyword>
<keyword id="KW-0472">Membrane</keyword>
<keyword id="KW-0539">Nucleus</keyword>
<keyword id="KW-1185">Reference proteome</keyword>
<keyword id="KW-0812">Transmembrane</keyword>
<keyword id="KW-1133">Transmembrane helix</keyword>
<protein>
    <recommendedName>
        <fullName>Transmembrane protein 120B</fullName>
    </recommendedName>
</protein>
<sequence>MSLERCQSEWTEIEQEYQQLQETHKVYRQKLEELTNLQAICSSAISKQRKGLKDLKQSLYKCKKSCNGKDSEVINDLQVQIKERQNVFFDMEAYLPKRNGLYLNLVLGNVNVTLLSNQAKFAYKDEYEKFKLYMTIILMFGAVTCLFLLNYRVTDEIFNFLLVWYYCTLTIRESILRSNGSRIKGWWVSHHYVSTFLSGVMLTWPEGPMYQMFRSQFLAFSIYQSCVQFLQYYYQSGCLYRLRALGERNQLDLTVEGFQSWMWRGLTFLLPFLFFGHFWQLYNAVTLFRLSALDDCKEWQVFMLALTFLVLFLGNFLTTLKVVHQKLLKNKDKVKNN</sequence>
<gene>
    <name type="primary">tmem120b</name>
    <name type="ORF">si:dkey-237o15.3</name>
    <name type="ORF">zgc:110614</name>
</gene>
<proteinExistence type="evidence at transcript level"/>
<evidence type="ECO:0000250" key="1">
    <source>
        <dbReference type="UniProtKB" id="Q3TA38"/>
    </source>
</evidence>
<evidence type="ECO:0000255" key="2"/>
<evidence type="ECO:0000305" key="3"/>
<dbReference type="EMBL" id="BX088560">
    <property type="protein sequence ID" value="CAK10778.1"/>
    <property type="molecule type" value="Genomic_DNA"/>
</dbReference>
<dbReference type="EMBL" id="BC095336">
    <property type="protein sequence ID" value="AAH95336.1"/>
    <property type="status" value="ALT_SEQ"/>
    <property type="molecule type" value="mRNA"/>
</dbReference>
<dbReference type="RefSeq" id="XP_005169279.1">
    <property type="nucleotide sequence ID" value="XM_005169222.4"/>
</dbReference>
<dbReference type="SMR" id="Q1LY80"/>
<dbReference type="FunCoup" id="Q1LY80">
    <property type="interactions" value="1021"/>
</dbReference>
<dbReference type="STRING" id="7955.ENSDARP00000106726"/>
<dbReference type="PaxDb" id="7955-ENSDARP00000106726"/>
<dbReference type="Ensembl" id="ENSDART00000126248">
    <property type="protein sequence ID" value="ENSDARP00000106726"/>
    <property type="gene ID" value="ENSDARG00000042929"/>
</dbReference>
<dbReference type="Ensembl" id="ENSDART00000182395">
    <property type="protein sequence ID" value="ENSDARP00000148367"/>
    <property type="gene ID" value="ENSDARG00000115087"/>
</dbReference>
<dbReference type="GeneID" id="798580"/>
<dbReference type="AGR" id="ZFIN:ZDB-GENE-050522-49"/>
<dbReference type="CTD" id="144404"/>
<dbReference type="ZFIN" id="ZDB-GENE-050522-49">
    <property type="gene designation" value="tmem120b"/>
</dbReference>
<dbReference type="eggNOG" id="KOG4758">
    <property type="taxonomic scope" value="Eukaryota"/>
</dbReference>
<dbReference type="InParanoid" id="Q1LY80"/>
<dbReference type="OMA" id="YFYLAMA"/>
<dbReference type="OrthoDB" id="2015098at2759"/>
<dbReference type="PhylomeDB" id="Q1LY80"/>
<dbReference type="TreeFam" id="TF313552"/>
<dbReference type="PRO" id="PR:Q1LY80"/>
<dbReference type="Proteomes" id="UP000000437">
    <property type="component" value="Chromosome 10"/>
</dbReference>
<dbReference type="Bgee" id="ENSDARG00000042929">
    <property type="expression patterns" value="Expressed in mature ovarian follicle and 21 other cell types or tissues"/>
</dbReference>
<dbReference type="ExpressionAtlas" id="Q1LY80">
    <property type="expression patterns" value="baseline"/>
</dbReference>
<dbReference type="GO" id="GO:0016020">
    <property type="term" value="C:membrane"/>
    <property type="evidence" value="ECO:0000318"/>
    <property type="project" value="GO_Central"/>
</dbReference>
<dbReference type="GO" id="GO:0005637">
    <property type="term" value="C:nuclear inner membrane"/>
    <property type="evidence" value="ECO:0007669"/>
    <property type="project" value="UniProtKB-SubCell"/>
</dbReference>
<dbReference type="GO" id="GO:0045444">
    <property type="term" value="P:fat cell differentiation"/>
    <property type="evidence" value="ECO:0000318"/>
    <property type="project" value="GO_Central"/>
</dbReference>
<dbReference type="InterPro" id="IPR012926">
    <property type="entry name" value="TMEM120A/B"/>
</dbReference>
<dbReference type="PANTHER" id="PTHR21433:SF2">
    <property type="entry name" value="TRANSMEMBRANE PROTEIN 120B"/>
    <property type="match status" value="1"/>
</dbReference>
<dbReference type="PANTHER" id="PTHR21433">
    <property type="entry name" value="TRANSMEMBRANE PROTEIN INDUCED BY TUMOR NECROSIS FACTOR ALPHA"/>
    <property type="match status" value="1"/>
</dbReference>
<dbReference type="Pfam" id="PF07851">
    <property type="entry name" value="TMEM120A-B"/>
    <property type="match status" value="1"/>
</dbReference>
<organism>
    <name type="scientific">Danio rerio</name>
    <name type="common">Zebrafish</name>
    <name type="synonym">Brachydanio rerio</name>
    <dbReference type="NCBI Taxonomy" id="7955"/>
    <lineage>
        <taxon>Eukaryota</taxon>
        <taxon>Metazoa</taxon>
        <taxon>Chordata</taxon>
        <taxon>Craniata</taxon>
        <taxon>Vertebrata</taxon>
        <taxon>Euteleostomi</taxon>
        <taxon>Actinopterygii</taxon>
        <taxon>Neopterygii</taxon>
        <taxon>Teleostei</taxon>
        <taxon>Ostariophysi</taxon>
        <taxon>Cypriniformes</taxon>
        <taxon>Danionidae</taxon>
        <taxon>Danioninae</taxon>
        <taxon>Danio</taxon>
    </lineage>
</organism>
<feature type="chain" id="PRO_0000309531" description="Transmembrane protein 120B">
    <location>
        <begin position="1"/>
        <end position="337"/>
    </location>
</feature>
<feature type="transmembrane region" description="Helical" evidence="2">
    <location>
        <begin position="100"/>
        <end position="122"/>
    </location>
</feature>
<feature type="transmembrane region" description="Helical" evidence="2">
    <location>
        <begin position="130"/>
        <end position="150"/>
    </location>
</feature>
<feature type="transmembrane region" description="Helical" evidence="2">
    <location>
        <begin position="157"/>
        <end position="175"/>
    </location>
</feature>
<feature type="transmembrane region" description="Helical" evidence="2">
    <location>
        <begin position="185"/>
        <end position="205"/>
    </location>
</feature>
<feature type="transmembrane region" description="Helical" evidence="2">
    <location>
        <begin position="268"/>
        <end position="288"/>
    </location>
</feature>
<feature type="transmembrane region" description="Helical" evidence="2">
    <location>
        <begin position="300"/>
        <end position="320"/>
    </location>
</feature>
<feature type="coiled-coil region" evidence="2">
    <location>
        <begin position="1"/>
        <end position="39"/>
    </location>
</feature>
<feature type="sequence conflict" description="In Ref. 2; AAH95336." evidence="3" ref="2">
    <original>E</original>
    <variation>A</variation>
    <location>
        <position position="173"/>
    </location>
</feature>
<reference key="1">
    <citation type="journal article" date="2013" name="Nature">
        <title>The zebrafish reference genome sequence and its relationship to the human genome.</title>
        <authorList>
            <person name="Howe K."/>
            <person name="Clark M.D."/>
            <person name="Torroja C.F."/>
            <person name="Torrance J."/>
            <person name="Berthelot C."/>
            <person name="Muffato M."/>
            <person name="Collins J.E."/>
            <person name="Humphray S."/>
            <person name="McLaren K."/>
            <person name="Matthews L."/>
            <person name="McLaren S."/>
            <person name="Sealy I."/>
            <person name="Caccamo M."/>
            <person name="Churcher C."/>
            <person name="Scott C."/>
            <person name="Barrett J.C."/>
            <person name="Koch R."/>
            <person name="Rauch G.J."/>
            <person name="White S."/>
            <person name="Chow W."/>
            <person name="Kilian B."/>
            <person name="Quintais L.T."/>
            <person name="Guerra-Assuncao J.A."/>
            <person name="Zhou Y."/>
            <person name="Gu Y."/>
            <person name="Yen J."/>
            <person name="Vogel J.H."/>
            <person name="Eyre T."/>
            <person name="Redmond S."/>
            <person name="Banerjee R."/>
            <person name="Chi J."/>
            <person name="Fu B."/>
            <person name="Langley E."/>
            <person name="Maguire S.F."/>
            <person name="Laird G.K."/>
            <person name="Lloyd D."/>
            <person name="Kenyon E."/>
            <person name="Donaldson S."/>
            <person name="Sehra H."/>
            <person name="Almeida-King J."/>
            <person name="Loveland J."/>
            <person name="Trevanion S."/>
            <person name="Jones M."/>
            <person name="Quail M."/>
            <person name="Willey D."/>
            <person name="Hunt A."/>
            <person name="Burton J."/>
            <person name="Sims S."/>
            <person name="McLay K."/>
            <person name="Plumb B."/>
            <person name="Davis J."/>
            <person name="Clee C."/>
            <person name="Oliver K."/>
            <person name="Clark R."/>
            <person name="Riddle C."/>
            <person name="Elliot D."/>
            <person name="Threadgold G."/>
            <person name="Harden G."/>
            <person name="Ware D."/>
            <person name="Begum S."/>
            <person name="Mortimore B."/>
            <person name="Kerry G."/>
            <person name="Heath P."/>
            <person name="Phillimore B."/>
            <person name="Tracey A."/>
            <person name="Corby N."/>
            <person name="Dunn M."/>
            <person name="Johnson C."/>
            <person name="Wood J."/>
            <person name="Clark S."/>
            <person name="Pelan S."/>
            <person name="Griffiths G."/>
            <person name="Smith M."/>
            <person name="Glithero R."/>
            <person name="Howden P."/>
            <person name="Barker N."/>
            <person name="Lloyd C."/>
            <person name="Stevens C."/>
            <person name="Harley J."/>
            <person name="Holt K."/>
            <person name="Panagiotidis G."/>
            <person name="Lovell J."/>
            <person name="Beasley H."/>
            <person name="Henderson C."/>
            <person name="Gordon D."/>
            <person name="Auger K."/>
            <person name="Wright D."/>
            <person name="Collins J."/>
            <person name="Raisen C."/>
            <person name="Dyer L."/>
            <person name="Leung K."/>
            <person name="Robertson L."/>
            <person name="Ambridge K."/>
            <person name="Leongamornlert D."/>
            <person name="McGuire S."/>
            <person name="Gilderthorp R."/>
            <person name="Griffiths C."/>
            <person name="Manthravadi D."/>
            <person name="Nichol S."/>
            <person name="Barker G."/>
            <person name="Whitehead S."/>
            <person name="Kay M."/>
            <person name="Brown J."/>
            <person name="Murnane C."/>
            <person name="Gray E."/>
            <person name="Humphries M."/>
            <person name="Sycamore N."/>
            <person name="Barker D."/>
            <person name="Saunders D."/>
            <person name="Wallis J."/>
            <person name="Babbage A."/>
            <person name="Hammond S."/>
            <person name="Mashreghi-Mohammadi M."/>
            <person name="Barr L."/>
            <person name="Martin S."/>
            <person name="Wray P."/>
            <person name="Ellington A."/>
            <person name="Matthews N."/>
            <person name="Ellwood M."/>
            <person name="Woodmansey R."/>
            <person name="Clark G."/>
            <person name="Cooper J."/>
            <person name="Tromans A."/>
            <person name="Grafham D."/>
            <person name="Skuce C."/>
            <person name="Pandian R."/>
            <person name="Andrews R."/>
            <person name="Harrison E."/>
            <person name="Kimberley A."/>
            <person name="Garnett J."/>
            <person name="Fosker N."/>
            <person name="Hall R."/>
            <person name="Garner P."/>
            <person name="Kelly D."/>
            <person name="Bird C."/>
            <person name="Palmer S."/>
            <person name="Gehring I."/>
            <person name="Berger A."/>
            <person name="Dooley C.M."/>
            <person name="Ersan-Urun Z."/>
            <person name="Eser C."/>
            <person name="Geiger H."/>
            <person name="Geisler M."/>
            <person name="Karotki L."/>
            <person name="Kirn A."/>
            <person name="Konantz J."/>
            <person name="Konantz M."/>
            <person name="Oberlander M."/>
            <person name="Rudolph-Geiger S."/>
            <person name="Teucke M."/>
            <person name="Lanz C."/>
            <person name="Raddatz G."/>
            <person name="Osoegawa K."/>
            <person name="Zhu B."/>
            <person name="Rapp A."/>
            <person name="Widaa S."/>
            <person name="Langford C."/>
            <person name="Yang F."/>
            <person name="Schuster S.C."/>
            <person name="Carter N.P."/>
            <person name="Harrow J."/>
            <person name="Ning Z."/>
            <person name="Herrero J."/>
            <person name="Searle S.M."/>
            <person name="Enright A."/>
            <person name="Geisler R."/>
            <person name="Plasterk R.H."/>
            <person name="Lee C."/>
            <person name="Westerfield M."/>
            <person name="de Jong P.J."/>
            <person name="Zon L.I."/>
            <person name="Postlethwait J.H."/>
            <person name="Nusslein-Volhard C."/>
            <person name="Hubbard T.J."/>
            <person name="Roest Crollius H."/>
            <person name="Rogers J."/>
            <person name="Stemple D.L."/>
        </authorList>
    </citation>
    <scope>NUCLEOTIDE SEQUENCE [LARGE SCALE GENOMIC DNA]</scope>
    <source>
        <strain>Tuebingen</strain>
    </source>
</reference>
<reference key="2">
    <citation type="submission" date="2005-05" db="EMBL/GenBank/DDBJ databases">
        <authorList>
            <consortium name="NIH - Zebrafish Gene Collection (ZGC) project"/>
        </authorList>
    </citation>
    <scope>NUCLEOTIDE SEQUENCE [LARGE SCALE MRNA]</scope>
    <source>
        <tissue>Embryo</tissue>
    </source>
</reference>
<name>T120B_DANRE</name>